<gene>
    <name evidence="1" type="primary">minC</name>
    <name type="ordered locus">BPUM_2440</name>
</gene>
<evidence type="ECO:0000255" key="1">
    <source>
        <dbReference type="HAMAP-Rule" id="MF_00267"/>
    </source>
</evidence>
<dbReference type="EMBL" id="CP000813">
    <property type="protein sequence ID" value="ABV63103.1"/>
    <property type="molecule type" value="Genomic_DNA"/>
</dbReference>
<dbReference type="RefSeq" id="WP_012010763.1">
    <property type="nucleotide sequence ID" value="NC_009848.4"/>
</dbReference>
<dbReference type="SMR" id="A8FFT6"/>
<dbReference type="STRING" id="315750.BPUM_2440"/>
<dbReference type="GeneID" id="5621704"/>
<dbReference type="KEGG" id="bpu:BPUM_2440"/>
<dbReference type="eggNOG" id="COG0850">
    <property type="taxonomic scope" value="Bacteria"/>
</dbReference>
<dbReference type="HOGENOM" id="CLU_048711_1_1_9"/>
<dbReference type="OrthoDB" id="9790810at2"/>
<dbReference type="Proteomes" id="UP000001355">
    <property type="component" value="Chromosome"/>
</dbReference>
<dbReference type="GO" id="GO:0000902">
    <property type="term" value="P:cell morphogenesis"/>
    <property type="evidence" value="ECO:0007669"/>
    <property type="project" value="InterPro"/>
</dbReference>
<dbReference type="GO" id="GO:0000917">
    <property type="term" value="P:division septum assembly"/>
    <property type="evidence" value="ECO:0007669"/>
    <property type="project" value="UniProtKB-KW"/>
</dbReference>
<dbReference type="GO" id="GO:1901891">
    <property type="term" value="P:regulation of cell septum assembly"/>
    <property type="evidence" value="ECO:0007669"/>
    <property type="project" value="InterPro"/>
</dbReference>
<dbReference type="Gene3D" id="2.160.20.70">
    <property type="match status" value="1"/>
</dbReference>
<dbReference type="Gene3D" id="3.30.160.540">
    <property type="match status" value="1"/>
</dbReference>
<dbReference type="HAMAP" id="MF_00267">
    <property type="entry name" value="MinC"/>
    <property type="match status" value="1"/>
</dbReference>
<dbReference type="InterPro" id="IPR016098">
    <property type="entry name" value="CAP/MinC_C"/>
</dbReference>
<dbReference type="InterPro" id="IPR013033">
    <property type="entry name" value="MinC"/>
</dbReference>
<dbReference type="InterPro" id="IPR036145">
    <property type="entry name" value="MinC_C_sf"/>
</dbReference>
<dbReference type="InterPro" id="IPR055219">
    <property type="entry name" value="MinC_N_1"/>
</dbReference>
<dbReference type="InterPro" id="IPR005526">
    <property type="entry name" value="Septum_form_inhib_MinC_C"/>
</dbReference>
<dbReference type="NCBIfam" id="TIGR01222">
    <property type="entry name" value="minC"/>
    <property type="match status" value="1"/>
</dbReference>
<dbReference type="PANTHER" id="PTHR34108">
    <property type="entry name" value="SEPTUM SITE-DETERMINING PROTEIN MINC"/>
    <property type="match status" value="1"/>
</dbReference>
<dbReference type="PANTHER" id="PTHR34108:SF1">
    <property type="entry name" value="SEPTUM SITE-DETERMINING PROTEIN MINC"/>
    <property type="match status" value="1"/>
</dbReference>
<dbReference type="Pfam" id="PF03775">
    <property type="entry name" value="MinC_C"/>
    <property type="match status" value="1"/>
</dbReference>
<dbReference type="Pfam" id="PF22642">
    <property type="entry name" value="MinC_N_1"/>
    <property type="match status" value="1"/>
</dbReference>
<dbReference type="SUPFAM" id="SSF63848">
    <property type="entry name" value="Cell-division inhibitor MinC, C-terminal domain"/>
    <property type="match status" value="1"/>
</dbReference>
<keyword id="KW-0131">Cell cycle</keyword>
<keyword id="KW-0132">Cell division</keyword>
<keyword id="KW-0717">Septation</keyword>
<reference key="1">
    <citation type="journal article" date="2007" name="PLoS ONE">
        <title>Paradoxical DNA repair and peroxide resistance gene conservation in Bacillus pumilus SAFR-032.</title>
        <authorList>
            <person name="Gioia J."/>
            <person name="Yerrapragada S."/>
            <person name="Qin X."/>
            <person name="Jiang H."/>
            <person name="Igboeli O.C."/>
            <person name="Muzny D."/>
            <person name="Dugan-Rocha S."/>
            <person name="Ding Y."/>
            <person name="Hawes A."/>
            <person name="Liu W."/>
            <person name="Perez L."/>
            <person name="Kovar C."/>
            <person name="Dinh H."/>
            <person name="Lee S."/>
            <person name="Nazareth L."/>
            <person name="Blyth P."/>
            <person name="Holder M."/>
            <person name="Buhay C."/>
            <person name="Tirumalai M.R."/>
            <person name="Liu Y."/>
            <person name="Dasgupta I."/>
            <person name="Bokhetache L."/>
            <person name="Fujita M."/>
            <person name="Karouia F."/>
            <person name="Eswara Moorthy P."/>
            <person name="Siefert J."/>
            <person name="Uzman A."/>
            <person name="Buzumbo P."/>
            <person name="Verma A."/>
            <person name="Zwiya H."/>
            <person name="McWilliams B.D."/>
            <person name="Olowu A."/>
            <person name="Clinkenbeard K.D."/>
            <person name="Newcombe D."/>
            <person name="Golebiewski L."/>
            <person name="Petrosino J.F."/>
            <person name="Nicholson W.L."/>
            <person name="Fox G.E."/>
            <person name="Venkateswaran K."/>
            <person name="Highlander S.K."/>
            <person name="Weinstock G.M."/>
        </authorList>
    </citation>
    <scope>NUCLEOTIDE SEQUENCE [LARGE SCALE GENOMIC DNA]</scope>
    <source>
        <strain>SAFR-032</strain>
    </source>
</reference>
<sequence>MKTQKQQYVTIKGTKNGLTLQLNDDCSFDDLLSGLRELLLLEQYTDGREGHKVNVHIKLGFRYLTEDQEMRLTEAVSENEHLVIHSIESDVMSTEEAKRLKAEAEITSVAKIVRSGQVLYVEGDLLLIGDVNPGGTIRAGGNIFVLGALKGVAHAGCNGNKQAVIAASRMIPTQLRIAQVFNRAPDQKEDGNEMECAYLDIDGNMIIERLQQLAHIRPNLTRLEGGM</sequence>
<protein>
    <recommendedName>
        <fullName evidence="1">Probable septum site-determining protein MinC</fullName>
    </recommendedName>
</protein>
<comment type="function">
    <text evidence="1">Cell division inhibitor that blocks the formation of polar Z ring septums. Rapidly oscillates between the poles of the cell to destabilize FtsZ filaments that have formed before they mature into polar Z rings. Prevents FtsZ polymerization.</text>
</comment>
<comment type="subunit">
    <text evidence="1">Interacts with MinD and FtsZ.</text>
</comment>
<comment type="similarity">
    <text evidence="1">Belongs to the MinC family.</text>
</comment>
<name>MINC_BACP2</name>
<organism>
    <name type="scientific">Bacillus pumilus (strain SAFR-032)</name>
    <dbReference type="NCBI Taxonomy" id="315750"/>
    <lineage>
        <taxon>Bacteria</taxon>
        <taxon>Bacillati</taxon>
        <taxon>Bacillota</taxon>
        <taxon>Bacilli</taxon>
        <taxon>Bacillales</taxon>
        <taxon>Bacillaceae</taxon>
        <taxon>Bacillus</taxon>
    </lineage>
</organism>
<proteinExistence type="inferred from homology"/>
<accession>A8FFT6</accession>
<feature type="chain" id="PRO_1000059115" description="Probable septum site-determining protein MinC">
    <location>
        <begin position="1"/>
        <end position="227"/>
    </location>
</feature>